<gene>
    <name evidence="1" type="primary">rsmJ</name>
    <name type="ordered locus">PP_1513</name>
</gene>
<sequence>MEEQGTGIRVEAMTAEYAQQARAWAERLGLPLQDDTAAFAVQVGVDGLQIQQLGPQAPGPVRVDFVEGQAAHRRQFGGGNGQMIAKAVGIAQGIRPQVLDATAGLGKDAFVLASLGCQMTLIERQPLIAALLEDGLARARADEEVGPIVGRMRLLTGNAIERMRAWEGEAPQVIYLDPMFPHRDKSALVKKEMRVFRPLVGDDLDAPALLEAALALASHRVVVKRPRKAPIIDGPKPSHSLEGKSSRYDIYPKKALKA</sequence>
<reference key="1">
    <citation type="journal article" date="2002" name="Environ. Microbiol.">
        <title>Complete genome sequence and comparative analysis of the metabolically versatile Pseudomonas putida KT2440.</title>
        <authorList>
            <person name="Nelson K.E."/>
            <person name="Weinel C."/>
            <person name="Paulsen I.T."/>
            <person name="Dodson R.J."/>
            <person name="Hilbert H."/>
            <person name="Martins dos Santos V.A.P."/>
            <person name="Fouts D.E."/>
            <person name="Gill S.R."/>
            <person name="Pop M."/>
            <person name="Holmes M."/>
            <person name="Brinkac L.M."/>
            <person name="Beanan M.J."/>
            <person name="DeBoy R.T."/>
            <person name="Daugherty S.C."/>
            <person name="Kolonay J.F."/>
            <person name="Madupu R."/>
            <person name="Nelson W.C."/>
            <person name="White O."/>
            <person name="Peterson J.D."/>
            <person name="Khouri H.M."/>
            <person name="Hance I."/>
            <person name="Chris Lee P."/>
            <person name="Holtzapple E.K."/>
            <person name="Scanlan D."/>
            <person name="Tran K."/>
            <person name="Moazzez A."/>
            <person name="Utterback T.R."/>
            <person name="Rizzo M."/>
            <person name="Lee K."/>
            <person name="Kosack D."/>
            <person name="Moestl D."/>
            <person name="Wedler H."/>
            <person name="Lauber J."/>
            <person name="Stjepandic D."/>
            <person name="Hoheisel J."/>
            <person name="Straetz M."/>
            <person name="Heim S."/>
            <person name="Kiewitz C."/>
            <person name="Eisen J.A."/>
            <person name="Timmis K.N."/>
            <person name="Duesterhoeft A."/>
            <person name="Tuemmler B."/>
            <person name="Fraser C.M."/>
        </authorList>
    </citation>
    <scope>NUCLEOTIDE SEQUENCE [LARGE SCALE GENOMIC DNA]</scope>
    <source>
        <strain>ATCC 47054 / DSM 6125 / CFBP 8728 / NCIMB 11950 / KT2440</strain>
    </source>
</reference>
<protein>
    <recommendedName>
        <fullName evidence="1">Ribosomal RNA small subunit methyltransferase J</fullName>
        <ecNumber evidence="1">2.1.1.242</ecNumber>
    </recommendedName>
    <alternativeName>
        <fullName evidence="1">16S rRNA m2G1516 methyltransferase</fullName>
    </alternativeName>
    <alternativeName>
        <fullName evidence="1">rRNA (guanine-N(2)-)-methyltransferase</fullName>
    </alternativeName>
</protein>
<dbReference type="EC" id="2.1.1.242" evidence="1"/>
<dbReference type="EMBL" id="AE015451">
    <property type="protein sequence ID" value="AAN67134.1"/>
    <property type="molecule type" value="Genomic_DNA"/>
</dbReference>
<dbReference type="RefSeq" id="NP_743670.1">
    <property type="nucleotide sequence ID" value="NC_002947.4"/>
</dbReference>
<dbReference type="RefSeq" id="WP_010952604.1">
    <property type="nucleotide sequence ID" value="NZ_CP169744.1"/>
</dbReference>
<dbReference type="SMR" id="Q88MQ7"/>
<dbReference type="STRING" id="160488.PP_1513"/>
<dbReference type="PaxDb" id="160488-PP_1513"/>
<dbReference type="KEGG" id="ppu:PP_1513"/>
<dbReference type="PATRIC" id="fig|160488.4.peg.1604"/>
<dbReference type="eggNOG" id="COG0742">
    <property type="taxonomic scope" value="Bacteria"/>
</dbReference>
<dbReference type="HOGENOM" id="CLU_076324_0_1_6"/>
<dbReference type="OrthoDB" id="3191794at2"/>
<dbReference type="PhylomeDB" id="Q88MQ7"/>
<dbReference type="BioCyc" id="PPUT160488:G1G01-1604-MONOMER"/>
<dbReference type="Proteomes" id="UP000000556">
    <property type="component" value="Chromosome"/>
</dbReference>
<dbReference type="GO" id="GO:0005737">
    <property type="term" value="C:cytoplasm"/>
    <property type="evidence" value="ECO:0007669"/>
    <property type="project" value="UniProtKB-SubCell"/>
</dbReference>
<dbReference type="GO" id="GO:0008990">
    <property type="term" value="F:rRNA (guanine-N2-)-methyltransferase activity"/>
    <property type="evidence" value="ECO:0007669"/>
    <property type="project" value="UniProtKB-UniRule"/>
</dbReference>
<dbReference type="CDD" id="cd02440">
    <property type="entry name" value="AdoMet_MTases"/>
    <property type="match status" value="1"/>
</dbReference>
<dbReference type="Gene3D" id="3.40.50.150">
    <property type="entry name" value="Vaccinia Virus protein VP39"/>
    <property type="match status" value="1"/>
</dbReference>
<dbReference type="HAMAP" id="MF_01523">
    <property type="entry name" value="16SrRNA_methyltr_J"/>
    <property type="match status" value="1"/>
</dbReference>
<dbReference type="InterPro" id="IPR007536">
    <property type="entry name" value="16SrRNA_methylTrfase_J"/>
</dbReference>
<dbReference type="InterPro" id="IPR029063">
    <property type="entry name" value="SAM-dependent_MTases_sf"/>
</dbReference>
<dbReference type="PANTHER" id="PTHR36112">
    <property type="entry name" value="RIBOSOMAL RNA SMALL SUBUNIT METHYLTRANSFERASE J"/>
    <property type="match status" value="1"/>
</dbReference>
<dbReference type="PANTHER" id="PTHR36112:SF1">
    <property type="entry name" value="RIBOSOMAL RNA SMALL SUBUNIT METHYLTRANSFERASE J"/>
    <property type="match status" value="1"/>
</dbReference>
<dbReference type="Pfam" id="PF04445">
    <property type="entry name" value="SAM_MT"/>
    <property type="match status" value="1"/>
</dbReference>
<dbReference type="SUPFAM" id="SSF53335">
    <property type="entry name" value="S-adenosyl-L-methionine-dependent methyltransferases"/>
    <property type="match status" value="1"/>
</dbReference>
<evidence type="ECO:0000255" key="1">
    <source>
        <dbReference type="HAMAP-Rule" id="MF_01523"/>
    </source>
</evidence>
<evidence type="ECO:0000256" key="2">
    <source>
        <dbReference type="SAM" id="MobiDB-lite"/>
    </source>
</evidence>
<accession>Q88MQ7</accession>
<keyword id="KW-0963">Cytoplasm</keyword>
<keyword id="KW-0489">Methyltransferase</keyword>
<keyword id="KW-1185">Reference proteome</keyword>
<keyword id="KW-0698">rRNA processing</keyword>
<keyword id="KW-0949">S-adenosyl-L-methionine</keyword>
<keyword id="KW-0808">Transferase</keyword>
<comment type="function">
    <text evidence="1">Specifically methylates the guanosine in position 1516 of 16S rRNA.</text>
</comment>
<comment type="catalytic activity">
    <reaction evidence="1">
        <text>guanosine(1516) in 16S rRNA + S-adenosyl-L-methionine = N(2)-methylguanosine(1516) in 16S rRNA + S-adenosyl-L-homocysteine + H(+)</text>
        <dbReference type="Rhea" id="RHEA:43220"/>
        <dbReference type="Rhea" id="RHEA-COMP:10412"/>
        <dbReference type="Rhea" id="RHEA-COMP:10413"/>
        <dbReference type="ChEBI" id="CHEBI:15378"/>
        <dbReference type="ChEBI" id="CHEBI:57856"/>
        <dbReference type="ChEBI" id="CHEBI:59789"/>
        <dbReference type="ChEBI" id="CHEBI:74269"/>
        <dbReference type="ChEBI" id="CHEBI:74481"/>
        <dbReference type="EC" id="2.1.1.242"/>
    </reaction>
</comment>
<comment type="subcellular location">
    <subcellularLocation>
        <location evidence="1">Cytoplasm</location>
    </subcellularLocation>
</comment>
<comment type="similarity">
    <text evidence="1">Belongs to the methyltransferase superfamily. RsmJ family.</text>
</comment>
<feature type="chain" id="PRO_0000212085" description="Ribosomal RNA small subunit methyltransferase J">
    <location>
        <begin position="1"/>
        <end position="258"/>
    </location>
</feature>
<feature type="region of interest" description="Disordered" evidence="2">
    <location>
        <begin position="232"/>
        <end position="258"/>
    </location>
</feature>
<feature type="compositionally biased region" description="Basic and acidic residues" evidence="2">
    <location>
        <begin position="239"/>
        <end position="252"/>
    </location>
</feature>
<feature type="binding site" evidence="1">
    <location>
        <begin position="123"/>
        <end position="124"/>
    </location>
    <ligand>
        <name>S-adenosyl-L-methionine</name>
        <dbReference type="ChEBI" id="CHEBI:59789"/>
    </ligand>
</feature>
<feature type="binding site" evidence="1">
    <location>
        <position position="177"/>
    </location>
    <ligand>
        <name>S-adenosyl-L-methionine</name>
        <dbReference type="ChEBI" id="CHEBI:59789"/>
    </ligand>
</feature>
<proteinExistence type="inferred from homology"/>
<name>RSMJ_PSEPK</name>
<organism>
    <name type="scientific">Pseudomonas putida (strain ATCC 47054 / DSM 6125 / CFBP 8728 / NCIMB 11950 / KT2440)</name>
    <dbReference type="NCBI Taxonomy" id="160488"/>
    <lineage>
        <taxon>Bacteria</taxon>
        <taxon>Pseudomonadati</taxon>
        <taxon>Pseudomonadota</taxon>
        <taxon>Gammaproteobacteria</taxon>
        <taxon>Pseudomonadales</taxon>
        <taxon>Pseudomonadaceae</taxon>
        <taxon>Pseudomonas</taxon>
    </lineage>
</organism>